<organism>
    <name type="scientific">Gallus gallus</name>
    <name type="common">Chicken</name>
    <dbReference type="NCBI Taxonomy" id="9031"/>
    <lineage>
        <taxon>Eukaryota</taxon>
        <taxon>Metazoa</taxon>
        <taxon>Chordata</taxon>
        <taxon>Craniata</taxon>
        <taxon>Vertebrata</taxon>
        <taxon>Euteleostomi</taxon>
        <taxon>Archelosauria</taxon>
        <taxon>Archosauria</taxon>
        <taxon>Dinosauria</taxon>
        <taxon>Saurischia</taxon>
        <taxon>Theropoda</taxon>
        <taxon>Coelurosauria</taxon>
        <taxon>Aves</taxon>
        <taxon>Neognathae</taxon>
        <taxon>Galloanserae</taxon>
        <taxon>Galliformes</taxon>
        <taxon>Phasianidae</taxon>
        <taxon>Phasianinae</taxon>
        <taxon>Gallus</taxon>
    </lineage>
</organism>
<proteinExistence type="evidence at transcript level"/>
<comment type="function">
    <text evidence="1 2">Catalyzes the formation of UDP-alpha-D-glucuronate, a constituent of complex glycosaminoglycans (By similarity). Required for the biosynthesis of chondroitin sulfate and heparan sulfate. Required for embryonic development via its role in the biosynthesis of glycosaminoglycans (By similarity).</text>
</comment>
<comment type="catalytic activity">
    <reaction evidence="1">
        <text>UDP-alpha-D-glucose + 2 NAD(+) + H2O = UDP-alpha-D-glucuronate + 2 NADH + 3 H(+)</text>
        <dbReference type="Rhea" id="RHEA:23596"/>
        <dbReference type="ChEBI" id="CHEBI:15377"/>
        <dbReference type="ChEBI" id="CHEBI:15378"/>
        <dbReference type="ChEBI" id="CHEBI:57540"/>
        <dbReference type="ChEBI" id="CHEBI:57945"/>
        <dbReference type="ChEBI" id="CHEBI:58052"/>
        <dbReference type="ChEBI" id="CHEBI:58885"/>
        <dbReference type="EC" id="1.1.1.22"/>
    </reaction>
</comment>
<comment type="activity regulation">
    <text evidence="1">UDP-alpha-D-xylose (UDX) acts as a feedback inhibitor. It binds at the same site as the substrate, but functions as allosteric inhibitor by triggering a conformation change that disrupts the active hexameric ring structure and gives rise to an inactive, horseshoe-shaped hexamer.</text>
</comment>
<comment type="pathway">
    <text evidence="1">Nucleotide-sugar biosynthesis; UDP-alpha-D-glucuronate biosynthesis; UDP-alpha-D-glucuronate from UDP-alpha-D-glucose: step 1/1.</text>
</comment>
<comment type="subunit">
    <text evidence="1">Homohexamer.</text>
</comment>
<comment type="domain">
    <text evidence="1">The protein goes through several conformation states during the reaction cycle, giving rise to hysteresis. In the initial state, the ligand-free protein is in an inactive conformation (E*). Substrate binding triggers a change to the active conformation (E). UDP-xylose binding triggers the transition to a distinct, inhibited conformation. The presence of an intrinsically disordered C-terminus promotes a more dynamic protein structure and favors a conformation with high affinity for UPD-xylose.</text>
</comment>
<comment type="domain">
    <text evidence="1">The allosteric switch region moves by about 5 Angstroms when UDP-xylose is bound, and occupies part of the UDP-glucose binding site. At the same time it promotes domain movements that disrupt the active hexameric ring structure and lead to the formation of a horseshoe-shaped, inactive hexamer.</text>
</comment>
<comment type="similarity">
    <text evidence="3">Belongs to the UDP-glucose/GDP-mannose dehydrogenase family.</text>
</comment>
<accession>Q5F3T9</accession>
<evidence type="ECO:0000250" key="1">
    <source>
        <dbReference type="UniProtKB" id="O60701"/>
    </source>
</evidence>
<evidence type="ECO:0000250" key="2">
    <source>
        <dbReference type="UniProtKB" id="O70475"/>
    </source>
</evidence>
<evidence type="ECO:0000305" key="3"/>
<gene>
    <name type="primary">UGDH</name>
    <name type="ORF">RCJMB04_7d7</name>
</gene>
<feature type="chain" id="PRO_0000317478" description="UDP-glucose 6-dehydrogenase">
    <location>
        <begin position="1"/>
        <end position="494"/>
    </location>
</feature>
<feature type="region of interest" description="Disordered" evidence="1">
    <location>
        <begin position="88"/>
        <end position="110"/>
    </location>
</feature>
<feature type="region of interest" description="Allosteric switch region" evidence="1">
    <location>
        <begin position="129"/>
        <end position="135"/>
    </location>
</feature>
<feature type="region of interest" description="Important for formation of active hexamer structure" evidence="1">
    <location>
        <begin position="321"/>
        <end position="325"/>
    </location>
</feature>
<feature type="region of interest" description="Disordered" evidence="1">
    <location>
        <begin position="466"/>
        <end position="494"/>
    </location>
</feature>
<feature type="active site" description="Proton donor/acceptor" evidence="1">
    <location>
        <position position="161"/>
    </location>
</feature>
<feature type="active site" description="Proton donor/acceptor" evidence="1">
    <location>
        <position position="220"/>
    </location>
</feature>
<feature type="active site" description="Nucleophile" evidence="1">
    <location>
        <position position="276"/>
    </location>
</feature>
<feature type="binding site" evidence="1">
    <location>
        <begin position="11"/>
        <end position="16"/>
    </location>
    <ligand>
        <name>NAD(+)</name>
        <dbReference type="ChEBI" id="CHEBI:57540"/>
    </ligand>
</feature>
<feature type="binding site" evidence="1">
    <location>
        <position position="36"/>
    </location>
    <ligand>
        <name>NAD(+)</name>
        <dbReference type="ChEBI" id="CHEBI:57540"/>
    </ligand>
</feature>
<feature type="binding site" evidence="1">
    <location>
        <position position="41"/>
    </location>
    <ligand>
        <name>NAD(+)</name>
        <dbReference type="ChEBI" id="CHEBI:57540"/>
    </ligand>
</feature>
<feature type="binding site" evidence="1">
    <location>
        <begin position="89"/>
        <end position="93"/>
    </location>
    <ligand>
        <name>NAD(+)</name>
        <dbReference type="ChEBI" id="CHEBI:57540"/>
    </ligand>
</feature>
<feature type="binding site" evidence="1">
    <location>
        <begin position="130"/>
        <end position="132"/>
    </location>
    <ligand>
        <name>NAD(+)</name>
        <dbReference type="ChEBI" id="CHEBI:57540"/>
    </ligand>
</feature>
<feature type="binding site" evidence="1">
    <location>
        <begin position="161"/>
        <end position="165"/>
    </location>
    <ligand>
        <name>substrate</name>
    </ligand>
</feature>
<feature type="binding site" evidence="1">
    <location>
        <position position="165"/>
    </location>
    <ligand>
        <name>NAD(+)</name>
        <dbReference type="ChEBI" id="CHEBI:57540"/>
    </ligand>
</feature>
<feature type="binding site" evidence="1">
    <location>
        <begin position="220"/>
        <end position="224"/>
    </location>
    <ligand>
        <name>substrate</name>
    </ligand>
</feature>
<feature type="binding site" evidence="1">
    <location>
        <position position="260"/>
    </location>
    <ligand>
        <name>substrate</name>
    </ligand>
</feature>
<feature type="binding site" evidence="1">
    <location>
        <begin position="267"/>
        <end position="273"/>
    </location>
    <ligand>
        <name>substrate</name>
    </ligand>
</feature>
<feature type="binding site" evidence="1">
    <location>
        <begin position="276"/>
        <end position="279"/>
    </location>
    <ligand>
        <name>NAD(+)</name>
        <dbReference type="ChEBI" id="CHEBI:57540"/>
    </ligand>
</feature>
<feature type="binding site" evidence="1">
    <location>
        <begin position="338"/>
        <end position="339"/>
    </location>
    <ligand>
        <name>substrate</name>
    </ligand>
</feature>
<feature type="binding site" evidence="1">
    <location>
        <position position="346"/>
    </location>
    <ligand>
        <name>NAD(+)</name>
        <dbReference type="ChEBI" id="CHEBI:57540"/>
    </ligand>
</feature>
<feature type="binding site" evidence="1">
    <location>
        <position position="442"/>
    </location>
    <ligand>
        <name>substrate</name>
    </ligand>
</feature>
<sequence length="494" mass="55064">MFEIKKICCIGAGYVGGPTCSVIAQMCPKIQVTVVDVNEARINAWNSDTLPIYEPGLKEVVESCRGRNLFFSTSIDDAIREADLVFISVNTPTKTYGMGKGRAADLKYIEACARRIVQNSNGYKIVTEKSTVPVRAAESIRRIFDANTKPNLDLQVLSNPEFLAEGTAIKDLKNPDRVLIGGDDSPEGQKAVRALCAVYEHWVPKEKILTTNTWSSELSKLAANAFLAQRISSINSISALCEATGADVEEVARAIGTDQRIGNKFLKASVGFGGSCFQKDVLNLVYLCEALNLPEVARYWQQVIDMNDYQRRRFASRIIDSLFNTVTDKKIAILGFAFKKDTGDTRESSSIYISKYLMDEGAKLHIYDPKVPKEQIILDLSHPGVSEDNQVSRLVTISQDPYEACDGAHALVICTEWDMFKELDYERIHKKMLKPAFIFDGRRVLDDLHNELQVIGFQIETIGKKVSAKRIPFASSCEIPKFSLQDPPVKKPRV</sequence>
<name>UGDH_CHICK</name>
<reference key="1">
    <citation type="journal article" date="2005" name="Genome Biol.">
        <title>Full-length cDNAs from chicken bursal lymphocytes to facilitate gene function analysis.</title>
        <authorList>
            <person name="Caldwell R.B."/>
            <person name="Kierzek A.M."/>
            <person name="Arakawa H."/>
            <person name="Bezzubov Y."/>
            <person name="Zaim J."/>
            <person name="Fiedler P."/>
            <person name="Kutter S."/>
            <person name="Blagodatski A."/>
            <person name="Kostovska D."/>
            <person name="Koter M."/>
            <person name="Plachy J."/>
            <person name="Carninci P."/>
            <person name="Hayashizaki Y."/>
            <person name="Buerstedde J.-M."/>
        </authorList>
    </citation>
    <scope>NUCLEOTIDE SEQUENCE [LARGE SCALE MRNA]</scope>
    <source>
        <strain>CB</strain>
        <tissue>Bursa of Fabricius</tissue>
    </source>
</reference>
<protein>
    <recommendedName>
        <fullName>UDP-glucose 6-dehydrogenase</fullName>
        <shortName>UDP-Glc dehydrogenase</shortName>
        <shortName>UDP-GlcDH</shortName>
        <shortName>UDPGDH</shortName>
        <ecNumber evidence="1">1.1.1.22</ecNumber>
    </recommendedName>
</protein>
<dbReference type="EC" id="1.1.1.22" evidence="1"/>
<dbReference type="EMBL" id="AJ851561">
    <property type="protein sequence ID" value="CAH65195.1"/>
    <property type="molecule type" value="mRNA"/>
</dbReference>
<dbReference type="RefSeq" id="NP_001012599.1">
    <property type="nucleotide sequence ID" value="NM_001012581.2"/>
</dbReference>
<dbReference type="SMR" id="Q5F3T9"/>
<dbReference type="FunCoup" id="Q5F3T9">
    <property type="interactions" value="2297"/>
</dbReference>
<dbReference type="STRING" id="9031.ENSGALP00000060119"/>
<dbReference type="GlyGen" id="Q5F3T9">
    <property type="glycosylation" value="1 site"/>
</dbReference>
<dbReference type="PaxDb" id="9031-ENSGALP00000023101"/>
<dbReference type="GeneID" id="422792"/>
<dbReference type="KEGG" id="gga:422792"/>
<dbReference type="CTD" id="7358"/>
<dbReference type="VEuPathDB" id="HostDB:geneid_422792"/>
<dbReference type="eggNOG" id="KOG2666">
    <property type="taxonomic scope" value="Eukaryota"/>
</dbReference>
<dbReference type="HOGENOM" id="CLU_023810_7_2_1"/>
<dbReference type="InParanoid" id="Q5F3T9"/>
<dbReference type="OMA" id="CFIAVGT"/>
<dbReference type="OrthoDB" id="5059218at2759"/>
<dbReference type="PhylomeDB" id="Q5F3T9"/>
<dbReference type="Reactome" id="R-GGA-173599">
    <property type="pathway name" value="Formation of the active cofactor, UDP-glucuronate"/>
</dbReference>
<dbReference type="UniPathway" id="UPA00038">
    <property type="reaction ID" value="UER00491"/>
</dbReference>
<dbReference type="PRO" id="PR:Q5F3T9"/>
<dbReference type="Proteomes" id="UP000000539">
    <property type="component" value="Chromosome 4"/>
</dbReference>
<dbReference type="Bgee" id="ENSGALG00000041993">
    <property type="expression patterns" value="Expressed in liver and 13 other cell types or tissues"/>
</dbReference>
<dbReference type="GO" id="GO:0005634">
    <property type="term" value="C:nucleus"/>
    <property type="evidence" value="ECO:0000318"/>
    <property type="project" value="GO_Central"/>
</dbReference>
<dbReference type="GO" id="GO:0051287">
    <property type="term" value="F:NAD binding"/>
    <property type="evidence" value="ECO:0007669"/>
    <property type="project" value="InterPro"/>
</dbReference>
<dbReference type="GO" id="GO:0003979">
    <property type="term" value="F:UDP-glucose 6-dehydrogenase activity"/>
    <property type="evidence" value="ECO:0000250"/>
    <property type="project" value="UniProtKB"/>
</dbReference>
<dbReference type="GO" id="GO:0050650">
    <property type="term" value="P:chondroitin sulfate proteoglycan biosynthetic process"/>
    <property type="evidence" value="ECO:0000250"/>
    <property type="project" value="UniProtKB"/>
</dbReference>
<dbReference type="GO" id="GO:0001702">
    <property type="term" value="P:gastrulation with mouth forming second"/>
    <property type="evidence" value="ECO:0000250"/>
    <property type="project" value="AgBase"/>
</dbReference>
<dbReference type="GO" id="GO:0006024">
    <property type="term" value="P:glycosaminoglycan biosynthetic process"/>
    <property type="evidence" value="ECO:0000318"/>
    <property type="project" value="GO_Central"/>
</dbReference>
<dbReference type="GO" id="GO:0015012">
    <property type="term" value="P:heparan sulfate proteoglycan biosynthetic process"/>
    <property type="evidence" value="ECO:0000250"/>
    <property type="project" value="UniProtKB"/>
</dbReference>
<dbReference type="GO" id="GO:0034214">
    <property type="term" value="P:protein hexamerization"/>
    <property type="evidence" value="ECO:0000250"/>
    <property type="project" value="UniProtKB"/>
</dbReference>
<dbReference type="GO" id="GO:0006065">
    <property type="term" value="P:UDP-glucuronate biosynthetic process"/>
    <property type="evidence" value="ECO:0000250"/>
    <property type="project" value="UniProtKB"/>
</dbReference>
<dbReference type="FunFam" id="1.20.5.100:FF:000001">
    <property type="entry name" value="UDP-glucose 6-dehydrogenase"/>
    <property type="match status" value="1"/>
</dbReference>
<dbReference type="FunFam" id="3.40.50.720:FF:000032">
    <property type="entry name" value="UDP-glucose 6-dehydrogenase"/>
    <property type="match status" value="1"/>
</dbReference>
<dbReference type="FunFam" id="3.40.50.720:FF:000114">
    <property type="entry name" value="UDP-glucose 6-dehydrogenase"/>
    <property type="match status" value="1"/>
</dbReference>
<dbReference type="Gene3D" id="1.20.5.100">
    <property type="entry name" value="Cytochrome c1, transmembrane anchor, C-terminal"/>
    <property type="match status" value="1"/>
</dbReference>
<dbReference type="Gene3D" id="3.40.50.720">
    <property type="entry name" value="NAD(P)-binding Rossmann-like Domain"/>
    <property type="match status" value="2"/>
</dbReference>
<dbReference type="InterPro" id="IPR008927">
    <property type="entry name" value="6-PGluconate_DH-like_C_sf"/>
</dbReference>
<dbReference type="InterPro" id="IPR036291">
    <property type="entry name" value="NAD(P)-bd_dom_sf"/>
</dbReference>
<dbReference type="InterPro" id="IPR017476">
    <property type="entry name" value="UDP-Glc/GDP-Man"/>
</dbReference>
<dbReference type="InterPro" id="IPR014027">
    <property type="entry name" value="UDP-Glc/GDP-Man_DH_C"/>
</dbReference>
<dbReference type="InterPro" id="IPR036220">
    <property type="entry name" value="UDP-Glc/GDP-Man_DH_C_sf"/>
</dbReference>
<dbReference type="InterPro" id="IPR014026">
    <property type="entry name" value="UDP-Glc/GDP-Man_DH_dimer"/>
</dbReference>
<dbReference type="InterPro" id="IPR001732">
    <property type="entry name" value="UDP-Glc/GDP-Man_DH_N"/>
</dbReference>
<dbReference type="InterPro" id="IPR028356">
    <property type="entry name" value="UDPglc_DH_euk"/>
</dbReference>
<dbReference type="NCBIfam" id="TIGR03026">
    <property type="entry name" value="NDP-sugDHase"/>
    <property type="match status" value="1"/>
</dbReference>
<dbReference type="PANTHER" id="PTHR11374:SF59">
    <property type="entry name" value="UDP-GLUCOSE 6-DEHYDROGENASE"/>
    <property type="match status" value="1"/>
</dbReference>
<dbReference type="PANTHER" id="PTHR11374">
    <property type="entry name" value="UDP-GLUCOSE DEHYDROGENASE/UDP-MANNAC DEHYDROGENASE"/>
    <property type="match status" value="1"/>
</dbReference>
<dbReference type="Pfam" id="PF00984">
    <property type="entry name" value="UDPG_MGDP_dh"/>
    <property type="match status" value="1"/>
</dbReference>
<dbReference type="Pfam" id="PF03720">
    <property type="entry name" value="UDPG_MGDP_dh_C"/>
    <property type="match status" value="1"/>
</dbReference>
<dbReference type="Pfam" id="PF03721">
    <property type="entry name" value="UDPG_MGDP_dh_N"/>
    <property type="match status" value="1"/>
</dbReference>
<dbReference type="PIRSF" id="PIRSF500133">
    <property type="entry name" value="UDPglc_DH_euk"/>
    <property type="match status" value="1"/>
</dbReference>
<dbReference type="PIRSF" id="PIRSF000124">
    <property type="entry name" value="UDPglc_GDPman_dh"/>
    <property type="match status" value="1"/>
</dbReference>
<dbReference type="SMART" id="SM00984">
    <property type="entry name" value="UDPG_MGDP_dh_C"/>
    <property type="match status" value="1"/>
</dbReference>
<dbReference type="SUPFAM" id="SSF48179">
    <property type="entry name" value="6-phosphogluconate dehydrogenase C-terminal domain-like"/>
    <property type="match status" value="1"/>
</dbReference>
<dbReference type="SUPFAM" id="SSF51735">
    <property type="entry name" value="NAD(P)-binding Rossmann-fold domains"/>
    <property type="match status" value="1"/>
</dbReference>
<dbReference type="SUPFAM" id="SSF52413">
    <property type="entry name" value="UDP-glucose/GDP-mannose dehydrogenase C-terminal domain"/>
    <property type="match status" value="1"/>
</dbReference>
<keyword id="KW-0021">Allosteric enzyme</keyword>
<keyword id="KW-0119">Carbohydrate metabolism</keyword>
<keyword id="KW-0520">NAD</keyword>
<keyword id="KW-0560">Oxidoreductase</keyword>
<keyword id="KW-1185">Reference proteome</keyword>